<name>LRRT2_MOUSE</name>
<accession>Q8BGA3</accession>
<accession>Q80U08</accession>
<evidence type="ECO:0000250" key="1"/>
<evidence type="ECO:0000250" key="2">
    <source>
        <dbReference type="UniProtKB" id="D4A7P2"/>
    </source>
</evidence>
<evidence type="ECO:0000255" key="3"/>
<evidence type="ECO:0000269" key="4">
    <source>
    </source>
</evidence>
<evidence type="ECO:0000305" key="5"/>
<organism>
    <name type="scientific">Mus musculus</name>
    <name type="common">Mouse</name>
    <dbReference type="NCBI Taxonomy" id="10090"/>
    <lineage>
        <taxon>Eukaryota</taxon>
        <taxon>Metazoa</taxon>
        <taxon>Chordata</taxon>
        <taxon>Craniata</taxon>
        <taxon>Vertebrata</taxon>
        <taxon>Euteleostomi</taxon>
        <taxon>Mammalia</taxon>
        <taxon>Eutheria</taxon>
        <taxon>Euarchontoglires</taxon>
        <taxon>Glires</taxon>
        <taxon>Rodentia</taxon>
        <taxon>Myomorpha</taxon>
        <taxon>Muroidea</taxon>
        <taxon>Muridae</taxon>
        <taxon>Murinae</taxon>
        <taxon>Mus</taxon>
        <taxon>Mus</taxon>
    </lineage>
</organism>
<feature type="signal peptide" evidence="3">
    <location>
        <begin position="1"/>
        <end position="33"/>
    </location>
</feature>
<feature type="chain" id="PRO_0000018354" description="Leucine-rich repeat transmembrane neuronal protein 2">
    <location>
        <begin position="34"/>
        <end position="515"/>
    </location>
</feature>
<feature type="topological domain" description="Extracellular" evidence="3">
    <location>
        <begin position="34"/>
        <end position="421"/>
    </location>
</feature>
<feature type="transmembrane region" description="Helical" evidence="3">
    <location>
        <begin position="422"/>
        <end position="442"/>
    </location>
</feature>
<feature type="topological domain" description="Cytoplasmic" evidence="3">
    <location>
        <begin position="443"/>
        <end position="515"/>
    </location>
</feature>
<feature type="domain" description="LRRNT">
    <location>
        <begin position="34"/>
        <end position="61"/>
    </location>
</feature>
<feature type="repeat" description="LRR 1">
    <location>
        <begin position="63"/>
        <end position="83"/>
    </location>
</feature>
<feature type="repeat" description="LRR 2">
    <location>
        <begin position="86"/>
        <end position="107"/>
    </location>
</feature>
<feature type="repeat" description="LRR 3">
    <location>
        <begin position="110"/>
        <end position="131"/>
    </location>
</feature>
<feature type="repeat" description="LRR 4">
    <location>
        <begin position="134"/>
        <end position="155"/>
    </location>
</feature>
<feature type="repeat" description="LRR 5">
    <location>
        <begin position="158"/>
        <end position="179"/>
    </location>
</feature>
<feature type="repeat" description="LRR 6">
    <location>
        <begin position="182"/>
        <end position="203"/>
    </location>
</feature>
<feature type="repeat" description="LRR 7">
    <location>
        <begin position="206"/>
        <end position="227"/>
    </location>
</feature>
<feature type="repeat" description="LRR 8">
    <location>
        <begin position="230"/>
        <end position="251"/>
    </location>
</feature>
<feature type="repeat" description="LRR 9">
    <location>
        <begin position="254"/>
        <end position="275"/>
    </location>
</feature>
<feature type="repeat" description="LRR 10">
    <location>
        <begin position="278"/>
        <end position="299"/>
    </location>
</feature>
<feature type="domain" description="LRRCT">
    <location>
        <begin position="311"/>
        <end position="362"/>
    </location>
</feature>
<feature type="short sequence motif" description="Involved in DLG4-binding" evidence="1">
    <location>
        <begin position="512"/>
        <end position="515"/>
    </location>
</feature>
<feature type="glycosylation site" description="N-linked (GlcNAc...) asparagine" evidence="3">
    <location>
        <position position="57"/>
    </location>
</feature>
<feature type="glycosylation site" description="N-linked (GlcNAc...) asparagine" evidence="3">
    <location>
        <position position="126"/>
    </location>
</feature>
<feature type="glycosylation site" description="N-linked (GlcNAc...) asparagine" evidence="3">
    <location>
        <position position="243"/>
    </location>
</feature>
<feature type="glycosylation site" description="N-linked (GlcNAc...) asparagine" evidence="3">
    <location>
        <position position="362"/>
    </location>
</feature>
<gene>
    <name type="primary">Lrrtm2</name>
    <name type="synonym">Kiaa0416</name>
</gene>
<sequence length="515" mass="58816">MGLHFKWPLGAPMLAAIYAMSVVLKMLPALGMACPPKCRCEKLLFYCDSQGFHSVPNATDKGSLGLSLRHNHITALERDQFASFSQLTWLHLDHNQISTVKEDAFQGLYKLKELILSSNKIFYLPNTTFTQLINLQNLDLSFNQLSSLHPELFYGLRKLQTLHLRSNSLRTIPVRLFWDCRSLEFLDLSTNRLRSLARNGFAGLIKLRELHLEHNQLTKINFAHFLRLSSLHTLFLQWNKISNLTCGMDWTWSTLEKLDLTGNEIKAIDLTVFETMPNLKILLMDNNKLNSLDSKILNSLKSLTTVGLSGNLWECSPRVCALASWLGSFQGRWEHSILCHSPDHTQGEDILDAVHGFQLCWNLSTTVTAMATTYRDPTTEYTKISSSSYHVGDKEIPTTAGIAVTTEEHFPEPDNAIFTQRVITGTMALLFSFFFIIFIVFISRKCCPPTLRRIRQCSMIQNHRQLRSQTRLHMSNMSDQGPYNEYEPTHEGPFIIINGYGQCKCQQLPYKECEV</sequence>
<keyword id="KW-1003">Cell membrane</keyword>
<keyword id="KW-0325">Glycoprotein</keyword>
<keyword id="KW-0433">Leucine-rich repeat</keyword>
<keyword id="KW-0472">Membrane</keyword>
<keyword id="KW-0628">Postsynaptic cell membrane</keyword>
<keyword id="KW-1185">Reference proteome</keyword>
<keyword id="KW-0677">Repeat</keyword>
<keyword id="KW-0732">Signal</keyword>
<keyword id="KW-0770">Synapse</keyword>
<keyword id="KW-0812">Transmembrane</keyword>
<keyword id="KW-1133">Transmembrane helix</keyword>
<reference key="1">
    <citation type="journal article" date="2003" name="Genomics">
        <title>A novel gene family encoding leucine-rich repeat transmembrane proteins differentially expressed in the nervous system.</title>
        <authorList>
            <person name="Lauren J."/>
            <person name="Airaksinen M.S."/>
            <person name="Saarma M."/>
            <person name="Timmusk T.T."/>
        </authorList>
    </citation>
    <scope>NUCLEOTIDE SEQUENCE [MRNA]</scope>
    <scope>TISSUE SPECIFICITY</scope>
    <source>
        <strain>C57BL/6J</strain>
    </source>
</reference>
<reference key="2">
    <citation type="journal article" date="2005" name="Science">
        <title>The transcriptional landscape of the mammalian genome.</title>
        <authorList>
            <person name="Carninci P."/>
            <person name="Kasukawa T."/>
            <person name="Katayama S."/>
            <person name="Gough J."/>
            <person name="Frith M.C."/>
            <person name="Maeda N."/>
            <person name="Oyama R."/>
            <person name="Ravasi T."/>
            <person name="Lenhard B."/>
            <person name="Wells C."/>
            <person name="Kodzius R."/>
            <person name="Shimokawa K."/>
            <person name="Bajic V.B."/>
            <person name="Brenner S.E."/>
            <person name="Batalov S."/>
            <person name="Forrest A.R."/>
            <person name="Zavolan M."/>
            <person name="Davis M.J."/>
            <person name="Wilming L.G."/>
            <person name="Aidinis V."/>
            <person name="Allen J.E."/>
            <person name="Ambesi-Impiombato A."/>
            <person name="Apweiler R."/>
            <person name="Aturaliya R.N."/>
            <person name="Bailey T.L."/>
            <person name="Bansal M."/>
            <person name="Baxter L."/>
            <person name="Beisel K.W."/>
            <person name="Bersano T."/>
            <person name="Bono H."/>
            <person name="Chalk A.M."/>
            <person name="Chiu K.P."/>
            <person name="Choudhary V."/>
            <person name="Christoffels A."/>
            <person name="Clutterbuck D.R."/>
            <person name="Crowe M.L."/>
            <person name="Dalla E."/>
            <person name="Dalrymple B.P."/>
            <person name="de Bono B."/>
            <person name="Della Gatta G."/>
            <person name="di Bernardo D."/>
            <person name="Down T."/>
            <person name="Engstrom P."/>
            <person name="Fagiolini M."/>
            <person name="Faulkner G."/>
            <person name="Fletcher C.F."/>
            <person name="Fukushima T."/>
            <person name="Furuno M."/>
            <person name="Futaki S."/>
            <person name="Gariboldi M."/>
            <person name="Georgii-Hemming P."/>
            <person name="Gingeras T.R."/>
            <person name="Gojobori T."/>
            <person name="Green R.E."/>
            <person name="Gustincich S."/>
            <person name="Harbers M."/>
            <person name="Hayashi Y."/>
            <person name="Hensch T.K."/>
            <person name="Hirokawa N."/>
            <person name="Hill D."/>
            <person name="Huminiecki L."/>
            <person name="Iacono M."/>
            <person name="Ikeo K."/>
            <person name="Iwama A."/>
            <person name="Ishikawa T."/>
            <person name="Jakt M."/>
            <person name="Kanapin A."/>
            <person name="Katoh M."/>
            <person name="Kawasawa Y."/>
            <person name="Kelso J."/>
            <person name="Kitamura H."/>
            <person name="Kitano H."/>
            <person name="Kollias G."/>
            <person name="Krishnan S.P."/>
            <person name="Kruger A."/>
            <person name="Kummerfeld S.K."/>
            <person name="Kurochkin I.V."/>
            <person name="Lareau L.F."/>
            <person name="Lazarevic D."/>
            <person name="Lipovich L."/>
            <person name="Liu J."/>
            <person name="Liuni S."/>
            <person name="McWilliam S."/>
            <person name="Madan Babu M."/>
            <person name="Madera M."/>
            <person name="Marchionni L."/>
            <person name="Matsuda H."/>
            <person name="Matsuzawa S."/>
            <person name="Miki H."/>
            <person name="Mignone F."/>
            <person name="Miyake S."/>
            <person name="Morris K."/>
            <person name="Mottagui-Tabar S."/>
            <person name="Mulder N."/>
            <person name="Nakano N."/>
            <person name="Nakauchi H."/>
            <person name="Ng P."/>
            <person name="Nilsson R."/>
            <person name="Nishiguchi S."/>
            <person name="Nishikawa S."/>
            <person name="Nori F."/>
            <person name="Ohara O."/>
            <person name="Okazaki Y."/>
            <person name="Orlando V."/>
            <person name="Pang K.C."/>
            <person name="Pavan W.J."/>
            <person name="Pavesi G."/>
            <person name="Pesole G."/>
            <person name="Petrovsky N."/>
            <person name="Piazza S."/>
            <person name="Reed J."/>
            <person name="Reid J.F."/>
            <person name="Ring B.Z."/>
            <person name="Ringwald M."/>
            <person name="Rost B."/>
            <person name="Ruan Y."/>
            <person name="Salzberg S.L."/>
            <person name="Sandelin A."/>
            <person name="Schneider C."/>
            <person name="Schoenbach C."/>
            <person name="Sekiguchi K."/>
            <person name="Semple C.A."/>
            <person name="Seno S."/>
            <person name="Sessa L."/>
            <person name="Sheng Y."/>
            <person name="Shibata Y."/>
            <person name="Shimada H."/>
            <person name="Shimada K."/>
            <person name="Silva D."/>
            <person name="Sinclair B."/>
            <person name="Sperling S."/>
            <person name="Stupka E."/>
            <person name="Sugiura K."/>
            <person name="Sultana R."/>
            <person name="Takenaka Y."/>
            <person name="Taki K."/>
            <person name="Tammoja K."/>
            <person name="Tan S.L."/>
            <person name="Tang S."/>
            <person name="Taylor M.S."/>
            <person name="Tegner J."/>
            <person name="Teichmann S.A."/>
            <person name="Ueda H.R."/>
            <person name="van Nimwegen E."/>
            <person name="Verardo R."/>
            <person name="Wei C.L."/>
            <person name="Yagi K."/>
            <person name="Yamanishi H."/>
            <person name="Zabarovsky E."/>
            <person name="Zhu S."/>
            <person name="Zimmer A."/>
            <person name="Hide W."/>
            <person name="Bult C."/>
            <person name="Grimmond S.M."/>
            <person name="Teasdale R.D."/>
            <person name="Liu E.T."/>
            <person name="Brusic V."/>
            <person name="Quackenbush J."/>
            <person name="Wahlestedt C."/>
            <person name="Mattick J.S."/>
            <person name="Hume D.A."/>
            <person name="Kai C."/>
            <person name="Sasaki D."/>
            <person name="Tomaru Y."/>
            <person name="Fukuda S."/>
            <person name="Kanamori-Katayama M."/>
            <person name="Suzuki M."/>
            <person name="Aoki J."/>
            <person name="Arakawa T."/>
            <person name="Iida J."/>
            <person name="Imamura K."/>
            <person name="Itoh M."/>
            <person name="Kato T."/>
            <person name="Kawaji H."/>
            <person name="Kawagashira N."/>
            <person name="Kawashima T."/>
            <person name="Kojima M."/>
            <person name="Kondo S."/>
            <person name="Konno H."/>
            <person name="Nakano K."/>
            <person name="Ninomiya N."/>
            <person name="Nishio T."/>
            <person name="Okada M."/>
            <person name="Plessy C."/>
            <person name="Shibata K."/>
            <person name="Shiraki T."/>
            <person name="Suzuki S."/>
            <person name="Tagami M."/>
            <person name="Waki K."/>
            <person name="Watahiki A."/>
            <person name="Okamura-Oho Y."/>
            <person name="Suzuki H."/>
            <person name="Kawai J."/>
            <person name="Hayashizaki Y."/>
        </authorList>
    </citation>
    <scope>NUCLEOTIDE SEQUENCE [LARGE SCALE MRNA]</scope>
    <source>
        <strain>C57BL/6J</strain>
        <tissue>Brain cortex</tissue>
        <tissue>Cerebellum</tissue>
        <tissue>Hippocampus</tissue>
        <tissue>Medulla oblongata</tissue>
        <tissue>Retina</tissue>
    </source>
</reference>
<reference key="3">
    <citation type="journal article" date="2003" name="DNA Res.">
        <title>Prediction of the coding sequences of mouse homologues of KIAA gene: II. The complete nucleotide sequences of 400 mouse KIAA-homologous cDNAs identified by screening of terminal sequences of cDNA clones randomly sampled from size-fractionated libraries.</title>
        <authorList>
            <person name="Okazaki N."/>
            <person name="Kikuno R."/>
            <person name="Ohara R."/>
            <person name="Inamoto S."/>
            <person name="Aizawa H."/>
            <person name="Yuasa S."/>
            <person name="Nakajima D."/>
            <person name="Nagase T."/>
            <person name="Ohara O."/>
            <person name="Koga H."/>
        </authorList>
    </citation>
    <scope>NUCLEOTIDE SEQUENCE [LARGE SCALE MRNA]</scope>
    <source>
        <tissue>Brain</tissue>
    </source>
</reference>
<comment type="function">
    <text evidence="2">Involved in the development and maintenance of excitatory synapses in the vertebrate nervous system. Regulates surface expression of AMPA receptors and instructs the development of functional glutamate release sites. Acts as a ligand for the presynaptic receptors NRXN1-A and NRXN1-B (By similarity).</text>
</comment>
<comment type="subunit">
    <text evidence="2">Interacts with DLG4. Interacts with neurexin NRXN1; interaction is mediated by heparan sulfate glycan modification on neurexin.</text>
</comment>
<comment type="subcellular location">
    <subcellularLocation>
        <location>Cell membrane</location>
        <topology>Single-pass type I membrane protein</topology>
    </subcellularLocation>
    <subcellularLocation>
        <location evidence="1">Postsynaptic cell membrane</location>
        <topology evidence="1">Single-pass type I membrane protein</topology>
    </subcellularLocation>
    <text evidence="1">Localized to excitatory synapses.</text>
</comment>
<comment type="tissue specificity">
    <text evidence="4">Expressed in neuronal tissues.</text>
</comment>
<comment type="domain">
    <text evidence="1">Synaptogenic effects are mediated by the extracellular LRR region.</text>
</comment>
<comment type="similarity">
    <text evidence="5">Belongs to the LRRTM family.</text>
</comment>
<comment type="sequence caution" evidence="5">
    <conflict type="erroneous initiation">
        <sequence resource="EMBL-CDS" id="BAC65560"/>
    </conflict>
    <text>Extended N-terminus.</text>
</comment>
<proteinExistence type="evidence at transcript level"/>
<dbReference type="EMBL" id="AY182027">
    <property type="protein sequence ID" value="AAO67548.1"/>
    <property type="molecule type" value="mRNA"/>
</dbReference>
<dbReference type="EMBL" id="AK043173">
    <property type="protein sequence ID" value="BAC31484.1"/>
    <property type="molecule type" value="mRNA"/>
</dbReference>
<dbReference type="EMBL" id="AK043784">
    <property type="protein sequence ID" value="BAC31653.1"/>
    <property type="molecule type" value="mRNA"/>
</dbReference>
<dbReference type="EMBL" id="AK044705">
    <property type="protein sequence ID" value="BAC32042.1"/>
    <property type="molecule type" value="mRNA"/>
</dbReference>
<dbReference type="EMBL" id="AK046818">
    <property type="protein sequence ID" value="BAC32883.1"/>
    <property type="molecule type" value="mRNA"/>
</dbReference>
<dbReference type="EMBL" id="AK049920">
    <property type="protein sequence ID" value="BAC33985.1"/>
    <property type="molecule type" value="mRNA"/>
</dbReference>
<dbReference type="EMBL" id="AK122278">
    <property type="protein sequence ID" value="BAC65560.1"/>
    <property type="status" value="ALT_INIT"/>
    <property type="molecule type" value="mRNA"/>
</dbReference>
<dbReference type="CCDS" id="CCDS50251.1"/>
<dbReference type="RefSeq" id="NP_821072.1">
    <property type="nucleotide sequence ID" value="NM_178005.4"/>
</dbReference>
<dbReference type="SASBDB" id="Q8BGA3"/>
<dbReference type="SMR" id="Q8BGA3"/>
<dbReference type="BioGRID" id="223196">
    <property type="interactions" value="1"/>
</dbReference>
<dbReference type="FunCoup" id="Q8BGA3">
    <property type="interactions" value="114"/>
</dbReference>
<dbReference type="STRING" id="10090.ENSMUSP00000089225"/>
<dbReference type="GlyCosmos" id="Q8BGA3">
    <property type="glycosylation" value="4 sites, No reported glycans"/>
</dbReference>
<dbReference type="GlyGen" id="Q8BGA3">
    <property type="glycosylation" value="5 sites, 1 N-linked glycan (1 site), 1 O-linked glycan (1 site)"/>
</dbReference>
<dbReference type="iPTMnet" id="Q8BGA3"/>
<dbReference type="PhosphoSitePlus" id="Q8BGA3"/>
<dbReference type="SwissPalm" id="Q8BGA3"/>
<dbReference type="PaxDb" id="10090-ENSMUSP00000089225"/>
<dbReference type="PeptideAtlas" id="Q8BGA3"/>
<dbReference type="ProteomicsDB" id="290176"/>
<dbReference type="ABCD" id="Q8BGA3">
    <property type="antibodies" value="1 sequenced antibody"/>
</dbReference>
<dbReference type="Antibodypedia" id="57042">
    <property type="antibodies" value="150 antibodies from 29 providers"/>
</dbReference>
<dbReference type="DNASU" id="107065"/>
<dbReference type="Ensembl" id="ENSMUST00000091636.5">
    <property type="protein sequence ID" value="ENSMUSP00000089225.4"/>
    <property type="gene ID" value="ENSMUSG00000071862.4"/>
</dbReference>
<dbReference type="GeneID" id="107065"/>
<dbReference type="KEGG" id="mmu:107065"/>
<dbReference type="UCSC" id="uc008ema.2">
    <property type="organism name" value="mouse"/>
</dbReference>
<dbReference type="AGR" id="MGI:2389174"/>
<dbReference type="CTD" id="26045"/>
<dbReference type="MGI" id="MGI:2389174">
    <property type="gene designation" value="Lrrtm2"/>
</dbReference>
<dbReference type="VEuPathDB" id="HostDB:ENSMUSG00000071862"/>
<dbReference type="eggNOG" id="KOG0619">
    <property type="taxonomic scope" value="Eukaryota"/>
</dbReference>
<dbReference type="GeneTree" id="ENSGT00940000160581"/>
<dbReference type="HOGENOM" id="CLU_032965_0_0_1"/>
<dbReference type="InParanoid" id="Q8BGA3"/>
<dbReference type="OMA" id="WPLGARM"/>
<dbReference type="OrthoDB" id="2325980at2759"/>
<dbReference type="PhylomeDB" id="Q8BGA3"/>
<dbReference type="TreeFam" id="TF332659"/>
<dbReference type="Reactome" id="R-MMU-6794361">
    <property type="pathway name" value="Neurexins and neuroligins"/>
</dbReference>
<dbReference type="BioGRID-ORCS" id="107065">
    <property type="hits" value="2 hits in 75 CRISPR screens"/>
</dbReference>
<dbReference type="CD-CODE" id="CE726F99">
    <property type="entry name" value="Postsynaptic density"/>
</dbReference>
<dbReference type="PRO" id="PR:Q8BGA3"/>
<dbReference type="Proteomes" id="UP000000589">
    <property type="component" value="Chromosome 18"/>
</dbReference>
<dbReference type="RNAct" id="Q8BGA3">
    <property type="molecule type" value="protein"/>
</dbReference>
<dbReference type="Bgee" id="ENSMUSG00000071862">
    <property type="expression patterns" value="Expressed in lateral geniculate body and 112 other cell types or tissues"/>
</dbReference>
<dbReference type="ExpressionAtlas" id="Q8BGA3">
    <property type="expression patterns" value="baseline and differential"/>
</dbReference>
<dbReference type="GO" id="GO:0060076">
    <property type="term" value="C:excitatory synapse"/>
    <property type="evidence" value="ECO:0000266"/>
    <property type="project" value="MGI"/>
</dbReference>
<dbReference type="GO" id="GO:0098982">
    <property type="term" value="C:GABA-ergic synapse"/>
    <property type="evidence" value="ECO:0007669"/>
    <property type="project" value="Ensembl"/>
</dbReference>
<dbReference type="GO" id="GO:0098978">
    <property type="term" value="C:glutamatergic synapse"/>
    <property type="evidence" value="ECO:0007669"/>
    <property type="project" value="Ensembl"/>
</dbReference>
<dbReference type="GO" id="GO:0098686">
    <property type="term" value="C:hippocampal mossy fiber to CA3 synapse"/>
    <property type="evidence" value="ECO:0007669"/>
    <property type="project" value="Ensembl"/>
</dbReference>
<dbReference type="GO" id="GO:0016020">
    <property type="term" value="C:membrane"/>
    <property type="evidence" value="ECO:0000250"/>
    <property type="project" value="MGI"/>
</dbReference>
<dbReference type="GO" id="GO:0098839">
    <property type="term" value="C:postsynaptic density membrane"/>
    <property type="evidence" value="ECO:0007669"/>
    <property type="project" value="Ensembl"/>
</dbReference>
<dbReference type="GO" id="GO:0098685">
    <property type="term" value="C:Schaffer collateral - CA1 synapse"/>
    <property type="evidence" value="ECO:0007669"/>
    <property type="project" value="Ensembl"/>
</dbReference>
<dbReference type="GO" id="GO:0042043">
    <property type="term" value="F:neurexin family protein binding"/>
    <property type="evidence" value="ECO:0007669"/>
    <property type="project" value="Ensembl"/>
</dbReference>
<dbReference type="GO" id="GO:0060291">
    <property type="term" value="P:long-term synaptic potentiation"/>
    <property type="evidence" value="ECO:0000316"/>
    <property type="project" value="MGI"/>
</dbReference>
<dbReference type="GO" id="GO:0002091">
    <property type="term" value="P:negative regulation of receptor internalization"/>
    <property type="evidence" value="ECO:0000316"/>
    <property type="project" value="MGI"/>
</dbReference>
<dbReference type="GO" id="GO:0051965">
    <property type="term" value="P:positive regulation of synapse assembly"/>
    <property type="evidence" value="ECO:0000314"/>
    <property type="project" value="MGI"/>
</dbReference>
<dbReference type="GO" id="GO:0099151">
    <property type="term" value="P:regulation of postsynaptic density assembly"/>
    <property type="evidence" value="ECO:0007669"/>
    <property type="project" value="Ensembl"/>
</dbReference>
<dbReference type="GO" id="GO:0050808">
    <property type="term" value="P:synapse organization"/>
    <property type="evidence" value="ECO:0000316"/>
    <property type="project" value="MGI"/>
</dbReference>
<dbReference type="FunFam" id="3.80.10.10:FF:000005">
    <property type="entry name" value="leucine-rich repeat transmembrane neuronal protein 4"/>
    <property type="match status" value="1"/>
</dbReference>
<dbReference type="Gene3D" id="3.80.10.10">
    <property type="entry name" value="Ribonuclease Inhibitor"/>
    <property type="match status" value="1"/>
</dbReference>
<dbReference type="InterPro" id="IPR001611">
    <property type="entry name" value="Leu-rich_rpt"/>
</dbReference>
<dbReference type="InterPro" id="IPR003591">
    <property type="entry name" value="Leu-rich_rpt_typical-subtyp"/>
</dbReference>
<dbReference type="InterPro" id="IPR032675">
    <property type="entry name" value="LRR_dom_sf"/>
</dbReference>
<dbReference type="PANTHER" id="PTHR24366">
    <property type="entry name" value="IG(IMMUNOGLOBULIN) AND LRR(LEUCINE RICH REPEAT) DOMAINS"/>
    <property type="match status" value="1"/>
</dbReference>
<dbReference type="PANTHER" id="PTHR24366:SF161">
    <property type="entry name" value="TIR DOMAIN-CONTAINING PROTEIN"/>
    <property type="match status" value="1"/>
</dbReference>
<dbReference type="Pfam" id="PF13855">
    <property type="entry name" value="LRR_8"/>
    <property type="match status" value="3"/>
</dbReference>
<dbReference type="PRINTS" id="PR00019">
    <property type="entry name" value="LEURICHRPT"/>
</dbReference>
<dbReference type="SMART" id="SM00369">
    <property type="entry name" value="LRR_TYP"/>
    <property type="match status" value="9"/>
</dbReference>
<dbReference type="SUPFAM" id="SSF52058">
    <property type="entry name" value="L domain-like"/>
    <property type="match status" value="1"/>
</dbReference>
<dbReference type="PROSITE" id="PS51450">
    <property type="entry name" value="LRR"/>
    <property type="match status" value="10"/>
</dbReference>
<protein>
    <recommendedName>
        <fullName>Leucine-rich repeat transmembrane neuronal protein 2</fullName>
    </recommendedName>
</protein>